<evidence type="ECO:0000255" key="1">
    <source>
        <dbReference type="HAMAP-Rule" id="MF_00607"/>
    </source>
</evidence>
<comment type="function">
    <text evidence="1">Specifically dimethylates two adjacent adenosines (A1518 and A1519) in the loop of a conserved hairpin near the 3'-end of 16S rRNA in the 30S particle. May play a critical role in biogenesis of 30S subunits.</text>
</comment>
<comment type="catalytic activity">
    <reaction evidence="1">
        <text>adenosine(1518)/adenosine(1519) in 16S rRNA + 4 S-adenosyl-L-methionine = N(6)-dimethyladenosine(1518)/N(6)-dimethyladenosine(1519) in 16S rRNA + 4 S-adenosyl-L-homocysteine + 4 H(+)</text>
        <dbReference type="Rhea" id="RHEA:19609"/>
        <dbReference type="Rhea" id="RHEA-COMP:10232"/>
        <dbReference type="Rhea" id="RHEA-COMP:10233"/>
        <dbReference type="ChEBI" id="CHEBI:15378"/>
        <dbReference type="ChEBI" id="CHEBI:57856"/>
        <dbReference type="ChEBI" id="CHEBI:59789"/>
        <dbReference type="ChEBI" id="CHEBI:74411"/>
        <dbReference type="ChEBI" id="CHEBI:74493"/>
        <dbReference type="EC" id="2.1.1.182"/>
    </reaction>
</comment>
<comment type="subcellular location">
    <subcellularLocation>
        <location evidence="1">Cytoplasm</location>
    </subcellularLocation>
</comment>
<comment type="similarity">
    <text evidence="1">Belongs to the class I-like SAM-binding methyltransferase superfamily. rRNA adenine N(6)-methyltransferase family. RsmA subfamily.</text>
</comment>
<keyword id="KW-0963">Cytoplasm</keyword>
<keyword id="KW-0489">Methyltransferase</keyword>
<keyword id="KW-1185">Reference proteome</keyword>
<keyword id="KW-0694">RNA-binding</keyword>
<keyword id="KW-0698">rRNA processing</keyword>
<keyword id="KW-0949">S-adenosyl-L-methionine</keyword>
<keyword id="KW-0808">Transferase</keyword>
<organism>
    <name type="scientific">Streptococcus agalactiae serotype V (strain ATCC BAA-611 / 2603 V/R)</name>
    <dbReference type="NCBI Taxonomy" id="208435"/>
    <lineage>
        <taxon>Bacteria</taxon>
        <taxon>Bacillati</taxon>
        <taxon>Bacillota</taxon>
        <taxon>Bacilli</taxon>
        <taxon>Lactobacillales</taxon>
        <taxon>Streptococcaceae</taxon>
        <taxon>Streptococcus</taxon>
    </lineage>
</organism>
<accession>Q8DXR8</accession>
<feature type="chain" id="PRO_0000101612" description="Ribosomal RNA small subunit methyltransferase A">
    <location>
        <begin position="1"/>
        <end position="290"/>
    </location>
</feature>
<feature type="binding site" evidence="1">
    <location>
        <position position="27"/>
    </location>
    <ligand>
        <name>S-adenosyl-L-methionine</name>
        <dbReference type="ChEBI" id="CHEBI:59789"/>
    </ligand>
</feature>
<feature type="binding site" evidence="1">
    <location>
        <position position="29"/>
    </location>
    <ligand>
        <name>S-adenosyl-L-methionine</name>
        <dbReference type="ChEBI" id="CHEBI:59789"/>
    </ligand>
</feature>
<feature type="binding site" evidence="1">
    <location>
        <position position="54"/>
    </location>
    <ligand>
        <name>S-adenosyl-L-methionine</name>
        <dbReference type="ChEBI" id="CHEBI:59789"/>
    </ligand>
</feature>
<feature type="binding site" evidence="1">
    <location>
        <position position="75"/>
    </location>
    <ligand>
        <name>S-adenosyl-L-methionine</name>
        <dbReference type="ChEBI" id="CHEBI:59789"/>
    </ligand>
</feature>
<feature type="binding site" evidence="1">
    <location>
        <position position="100"/>
    </location>
    <ligand>
        <name>S-adenosyl-L-methionine</name>
        <dbReference type="ChEBI" id="CHEBI:59789"/>
    </ligand>
</feature>
<feature type="binding site" evidence="1">
    <location>
        <position position="125"/>
    </location>
    <ligand>
        <name>S-adenosyl-L-methionine</name>
        <dbReference type="ChEBI" id="CHEBI:59789"/>
    </ligand>
</feature>
<protein>
    <recommendedName>
        <fullName evidence="1">Ribosomal RNA small subunit methyltransferase A</fullName>
        <ecNumber evidence="1">2.1.1.182</ecNumber>
    </recommendedName>
    <alternativeName>
        <fullName evidence="1">16S rRNA (adenine(1518)-N(6)/adenine(1519)-N(6))-dimethyltransferase</fullName>
    </alternativeName>
    <alternativeName>
        <fullName evidence="1">16S rRNA dimethyladenosine transferase</fullName>
    </alternativeName>
    <alternativeName>
        <fullName evidence="1">16S rRNA dimethylase</fullName>
    </alternativeName>
    <alternativeName>
        <fullName evidence="1">S-adenosylmethionine-6-N', N'-adenosyl(rRNA) dimethyltransferase</fullName>
    </alternativeName>
</protein>
<gene>
    <name evidence="1" type="primary">rsmA</name>
    <name evidence="1" type="synonym">ksgA</name>
    <name type="ordered locus">SAG1779</name>
</gene>
<dbReference type="EC" id="2.1.1.182" evidence="1"/>
<dbReference type="EMBL" id="AE009948">
    <property type="protein sequence ID" value="AAN00642.1"/>
    <property type="molecule type" value="Genomic_DNA"/>
</dbReference>
<dbReference type="RefSeq" id="NP_688769.1">
    <property type="nucleotide sequence ID" value="NC_004116.1"/>
</dbReference>
<dbReference type="RefSeq" id="WP_001216818.1">
    <property type="nucleotide sequence ID" value="NC_004116.1"/>
</dbReference>
<dbReference type="SMR" id="Q8DXR8"/>
<dbReference type="STRING" id="208435.SAG1779"/>
<dbReference type="DNASU" id="1014588"/>
<dbReference type="KEGG" id="sag:SAG1779"/>
<dbReference type="PATRIC" id="fig|208435.3.peg.1785"/>
<dbReference type="HOGENOM" id="CLU_041220_0_0_9"/>
<dbReference type="OrthoDB" id="9814755at2"/>
<dbReference type="Proteomes" id="UP000000821">
    <property type="component" value="Chromosome"/>
</dbReference>
<dbReference type="GO" id="GO:0005829">
    <property type="term" value="C:cytosol"/>
    <property type="evidence" value="ECO:0007669"/>
    <property type="project" value="TreeGrafter"/>
</dbReference>
<dbReference type="GO" id="GO:0052908">
    <property type="term" value="F:16S rRNA (adenine(1518)-N(6)/adenine(1519)-N(6))-dimethyltransferase activity"/>
    <property type="evidence" value="ECO:0007669"/>
    <property type="project" value="UniProtKB-EC"/>
</dbReference>
<dbReference type="GO" id="GO:0003723">
    <property type="term" value="F:RNA binding"/>
    <property type="evidence" value="ECO:0007669"/>
    <property type="project" value="UniProtKB-KW"/>
</dbReference>
<dbReference type="CDD" id="cd02440">
    <property type="entry name" value="AdoMet_MTases"/>
    <property type="match status" value="1"/>
</dbReference>
<dbReference type="FunFam" id="3.40.50.150:FF:000023">
    <property type="entry name" value="Ribosomal RNA small subunit methyltransferase A"/>
    <property type="match status" value="1"/>
</dbReference>
<dbReference type="Gene3D" id="1.10.8.100">
    <property type="entry name" value="Ribosomal RNA adenine dimethylase-like, domain 2"/>
    <property type="match status" value="1"/>
</dbReference>
<dbReference type="Gene3D" id="3.40.50.150">
    <property type="entry name" value="Vaccinia Virus protein VP39"/>
    <property type="match status" value="1"/>
</dbReference>
<dbReference type="HAMAP" id="MF_00607">
    <property type="entry name" value="16SrRNA_methyltr_A"/>
    <property type="match status" value="1"/>
</dbReference>
<dbReference type="InterPro" id="IPR001737">
    <property type="entry name" value="KsgA/Erm"/>
</dbReference>
<dbReference type="InterPro" id="IPR023165">
    <property type="entry name" value="rRNA_Ade_diMease-like_C"/>
</dbReference>
<dbReference type="InterPro" id="IPR020596">
    <property type="entry name" value="rRNA_Ade_Mease_Trfase_CS"/>
</dbReference>
<dbReference type="InterPro" id="IPR020598">
    <property type="entry name" value="rRNA_Ade_methylase_Trfase_N"/>
</dbReference>
<dbReference type="InterPro" id="IPR011530">
    <property type="entry name" value="rRNA_adenine_dimethylase"/>
</dbReference>
<dbReference type="InterPro" id="IPR029063">
    <property type="entry name" value="SAM-dependent_MTases_sf"/>
</dbReference>
<dbReference type="NCBIfam" id="TIGR00755">
    <property type="entry name" value="ksgA"/>
    <property type="match status" value="1"/>
</dbReference>
<dbReference type="PANTHER" id="PTHR11727">
    <property type="entry name" value="DIMETHYLADENOSINE TRANSFERASE"/>
    <property type="match status" value="1"/>
</dbReference>
<dbReference type="PANTHER" id="PTHR11727:SF7">
    <property type="entry name" value="DIMETHYLADENOSINE TRANSFERASE-RELATED"/>
    <property type="match status" value="1"/>
</dbReference>
<dbReference type="Pfam" id="PF00398">
    <property type="entry name" value="RrnaAD"/>
    <property type="match status" value="1"/>
</dbReference>
<dbReference type="SMART" id="SM00650">
    <property type="entry name" value="rADc"/>
    <property type="match status" value="1"/>
</dbReference>
<dbReference type="SUPFAM" id="SSF53335">
    <property type="entry name" value="S-adenosyl-L-methionine-dependent methyltransferases"/>
    <property type="match status" value="1"/>
</dbReference>
<dbReference type="PROSITE" id="PS01131">
    <property type="entry name" value="RRNA_A_DIMETH"/>
    <property type="match status" value="1"/>
</dbReference>
<dbReference type="PROSITE" id="PS51689">
    <property type="entry name" value="SAM_RNA_A_N6_MT"/>
    <property type="match status" value="1"/>
</dbReference>
<reference key="1">
    <citation type="journal article" date="2002" name="Proc. Natl. Acad. Sci. U.S.A.">
        <title>Complete genome sequence and comparative genomic analysis of an emerging human pathogen, serotype V Streptococcus agalactiae.</title>
        <authorList>
            <person name="Tettelin H."/>
            <person name="Masignani V."/>
            <person name="Cieslewicz M.J."/>
            <person name="Eisen J.A."/>
            <person name="Peterson S.N."/>
            <person name="Wessels M.R."/>
            <person name="Paulsen I.T."/>
            <person name="Nelson K.E."/>
            <person name="Margarit I."/>
            <person name="Read T.D."/>
            <person name="Madoff L.C."/>
            <person name="Wolf A.M."/>
            <person name="Beanan M.J."/>
            <person name="Brinkac L.M."/>
            <person name="Daugherty S.C."/>
            <person name="DeBoy R.T."/>
            <person name="Durkin A.S."/>
            <person name="Kolonay J.F."/>
            <person name="Madupu R."/>
            <person name="Lewis M.R."/>
            <person name="Radune D."/>
            <person name="Fedorova N.B."/>
            <person name="Scanlan D."/>
            <person name="Khouri H.M."/>
            <person name="Mulligan S."/>
            <person name="Carty H.A."/>
            <person name="Cline R.T."/>
            <person name="Van Aken S.E."/>
            <person name="Gill J."/>
            <person name="Scarselli M."/>
            <person name="Mora M."/>
            <person name="Iacobini E.T."/>
            <person name="Brettoni C."/>
            <person name="Galli G."/>
            <person name="Mariani M."/>
            <person name="Vegni F."/>
            <person name="Maione D."/>
            <person name="Rinaudo D."/>
            <person name="Rappuoli R."/>
            <person name="Telford J.L."/>
            <person name="Kasper D.L."/>
            <person name="Grandi G."/>
            <person name="Fraser C.M."/>
        </authorList>
    </citation>
    <scope>NUCLEOTIDE SEQUENCE [LARGE SCALE GENOMIC DNA]</scope>
    <source>
        <strain>ATCC BAA-611 / 2603 V/R</strain>
    </source>
</reference>
<proteinExistence type="inferred from homology"/>
<sequence length="290" mass="32395">MRIADKTVTRAILERHGFTFKKSFGQNFLTDTNILQKIVDTAEIDKGVNVIEIGPGIGALTEFLAENAAEVMAFEIDDRLIPILADTLARFDNVQVVNQDILKADLQTQIQAFKNPDLPIKVVANLPYYITTPILMHLIESKIPFAEFVVMIQKEVADRISAMPNTKAYGSLSIAVQYYMTAKVSFIVPRTVFVPAPNVDSAILKMVRRDQPVVSVQDEDFFFRVSKVAFVHRRKTLWNNLTSHFGKSEDTKAKLEKALEIAKIKPSIRGEALSIPDFASLADALKEVGI</sequence>
<name>RSMA_STRA5</name>